<proteinExistence type="inferred from homology"/>
<reference key="1">
    <citation type="journal article" date="2008" name="J. Bacteriol.">
        <title>The genome sequence of the tomato-pathogenic actinomycete Clavibacter michiganensis subsp. michiganensis NCPPB382 reveals a large island involved in pathogenicity.</title>
        <authorList>
            <person name="Gartemann K.-H."/>
            <person name="Abt B."/>
            <person name="Bekel T."/>
            <person name="Burger A."/>
            <person name="Engemann J."/>
            <person name="Fluegel M."/>
            <person name="Gaigalat L."/>
            <person name="Goesmann A."/>
            <person name="Graefen I."/>
            <person name="Kalinowski J."/>
            <person name="Kaup O."/>
            <person name="Kirchner O."/>
            <person name="Krause L."/>
            <person name="Linke B."/>
            <person name="McHardy A."/>
            <person name="Meyer F."/>
            <person name="Pohle S."/>
            <person name="Rueckert C."/>
            <person name="Schneiker S."/>
            <person name="Zellermann E.-M."/>
            <person name="Puehler A."/>
            <person name="Eichenlaub R."/>
            <person name="Kaiser O."/>
            <person name="Bartels D."/>
        </authorList>
    </citation>
    <scope>NUCLEOTIDE SEQUENCE [LARGE SCALE GENOMIC DNA]</scope>
    <source>
        <strain>NCPPB 382</strain>
    </source>
</reference>
<comment type="function">
    <text evidence="1">May play a role in DNA repair. It seems to be involved in an RecBC-independent recombinational process of DNA repair. It may act with RecF and RecO.</text>
</comment>
<comment type="similarity">
    <text evidence="1">Belongs to the RecR family.</text>
</comment>
<name>RECR_CLAM3</name>
<gene>
    <name evidence="1" type="primary">recR</name>
    <name type="ordered locus">CMM_0901</name>
</gene>
<organism>
    <name type="scientific">Clavibacter michiganensis subsp. michiganensis (strain NCPPB 382)</name>
    <dbReference type="NCBI Taxonomy" id="443906"/>
    <lineage>
        <taxon>Bacteria</taxon>
        <taxon>Bacillati</taxon>
        <taxon>Actinomycetota</taxon>
        <taxon>Actinomycetes</taxon>
        <taxon>Micrococcales</taxon>
        <taxon>Microbacteriaceae</taxon>
        <taxon>Clavibacter</taxon>
    </lineage>
</organism>
<protein>
    <recommendedName>
        <fullName evidence="1">Recombination protein RecR</fullName>
    </recommendedName>
</protein>
<evidence type="ECO:0000255" key="1">
    <source>
        <dbReference type="HAMAP-Rule" id="MF_00017"/>
    </source>
</evidence>
<sequence>MYEGIVQELIDELGRLPGIGPKSAQRIAFHILQTETFDVSRLAEVLTVVRDKVRFCAICGNVSEKETCGICRDPRRSPATICVVEEAKDVVAIERTREFRGLYHVLGGAISPIDGIGPDDLRIRQLMQRLADATVTEVIIATDPNLEGEATATYLSRLLSTFDIRVTRLASGLPVGGDLEYADEVTLGRAFEGRRLVGE</sequence>
<accession>A5CPD8</accession>
<feature type="chain" id="PRO_0000322877" description="Recombination protein RecR">
    <location>
        <begin position="1"/>
        <end position="199"/>
    </location>
</feature>
<feature type="domain" description="Toprim" evidence="1">
    <location>
        <begin position="79"/>
        <end position="174"/>
    </location>
</feature>
<feature type="zinc finger region" description="C4-type" evidence="1">
    <location>
        <begin position="56"/>
        <end position="71"/>
    </location>
</feature>
<dbReference type="EMBL" id="AM711867">
    <property type="protein sequence ID" value="CAN00938.1"/>
    <property type="molecule type" value="Genomic_DNA"/>
</dbReference>
<dbReference type="RefSeq" id="WP_012037586.1">
    <property type="nucleotide sequence ID" value="NC_009480.1"/>
</dbReference>
<dbReference type="SMR" id="A5CPD8"/>
<dbReference type="GeneID" id="92946862"/>
<dbReference type="KEGG" id="cmi:CMM_0901"/>
<dbReference type="eggNOG" id="COG0353">
    <property type="taxonomic scope" value="Bacteria"/>
</dbReference>
<dbReference type="HOGENOM" id="CLU_060739_1_0_11"/>
<dbReference type="OrthoDB" id="9802672at2"/>
<dbReference type="Proteomes" id="UP000001564">
    <property type="component" value="Chromosome"/>
</dbReference>
<dbReference type="GO" id="GO:0003677">
    <property type="term" value="F:DNA binding"/>
    <property type="evidence" value="ECO:0007669"/>
    <property type="project" value="UniProtKB-UniRule"/>
</dbReference>
<dbReference type="GO" id="GO:0008270">
    <property type="term" value="F:zinc ion binding"/>
    <property type="evidence" value="ECO:0007669"/>
    <property type="project" value="UniProtKB-KW"/>
</dbReference>
<dbReference type="GO" id="GO:0006310">
    <property type="term" value="P:DNA recombination"/>
    <property type="evidence" value="ECO:0007669"/>
    <property type="project" value="UniProtKB-UniRule"/>
</dbReference>
<dbReference type="GO" id="GO:0006281">
    <property type="term" value="P:DNA repair"/>
    <property type="evidence" value="ECO:0007669"/>
    <property type="project" value="UniProtKB-UniRule"/>
</dbReference>
<dbReference type="CDD" id="cd01025">
    <property type="entry name" value="TOPRIM_recR"/>
    <property type="match status" value="1"/>
</dbReference>
<dbReference type="Gene3D" id="3.30.60.80">
    <property type="match status" value="1"/>
</dbReference>
<dbReference type="Gene3D" id="3.40.1360.10">
    <property type="match status" value="1"/>
</dbReference>
<dbReference type="Gene3D" id="6.10.250.240">
    <property type="match status" value="1"/>
</dbReference>
<dbReference type="Gene3D" id="1.10.8.420">
    <property type="entry name" value="RecR Domain 1"/>
    <property type="match status" value="1"/>
</dbReference>
<dbReference type="HAMAP" id="MF_00017">
    <property type="entry name" value="RecR"/>
    <property type="match status" value="1"/>
</dbReference>
<dbReference type="InterPro" id="IPR000093">
    <property type="entry name" value="DNA_Rcmb_RecR"/>
</dbReference>
<dbReference type="InterPro" id="IPR003583">
    <property type="entry name" value="Hlx-hairpin-Hlx_DNA-bd_motif"/>
</dbReference>
<dbReference type="InterPro" id="IPR023627">
    <property type="entry name" value="Rcmb_RecR"/>
</dbReference>
<dbReference type="InterPro" id="IPR015967">
    <property type="entry name" value="Rcmb_RecR_Znf"/>
</dbReference>
<dbReference type="InterPro" id="IPR006171">
    <property type="entry name" value="TOPRIM_dom"/>
</dbReference>
<dbReference type="InterPro" id="IPR034137">
    <property type="entry name" value="TOPRIM_RecR"/>
</dbReference>
<dbReference type="NCBIfam" id="TIGR00615">
    <property type="entry name" value="recR"/>
    <property type="match status" value="1"/>
</dbReference>
<dbReference type="PANTHER" id="PTHR30446">
    <property type="entry name" value="RECOMBINATION PROTEIN RECR"/>
    <property type="match status" value="1"/>
</dbReference>
<dbReference type="PANTHER" id="PTHR30446:SF0">
    <property type="entry name" value="RECOMBINATION PROTEIN RECR"/>
    <property type="match status" value="1"/>
</dbReference>
<dbReference type="Pfam" id="PF21175">
    <property type="entry name" value="RecR_C"/>
    <property type="match status" value="1"/>
</dbReference>
<dbReference type="Pfam" id="PF21176">
    <property type="entry name" value="RecR_HhH"/>
    <property type="match status" value="1"/>
</dbReference>
<dbReference type="Pfam" id="PF02132">
    <property type="entry name" value="RecR_ZnF"/>
    <property type="match status" value="1"/>
</dbReference>
<dbReference type="Pfam" id="PF13662">
    <property type="entry name" value="Toprim_4"/>
    <property type="match status" value="1"/>
</dbReference>
<dbReference type="SMART" id="SM00278">
    <property type="entry name" value="HhH1"/>
    <property type="match status" value="1"/>
</dbReference>
<dbReference type="SMART" id="SM00493">
    <property type="entry name" value="TOPRIM"/>
    <property type="match status" value="1"/>
</dbReference>
<dbReference type="SUPFAM" id="SSF111304">
    <property type="entry name" value="Recombination protein RecR"/>
    <property type="match status" value="1"/>
</dbReference>
<dbReference type="PROSITE" id="PS01300">
    <property type="entry name" value="RECR"/>
    <property type="match status" value="1"/>
</dbReference>
<dbReference type="PROSITE" id="PS50880">
    <property type="entry name" value="TOPRIM"/>
    <property type="match status" value="1"/>
</dbReference>
<keyword id="KW-0227">DNA damage</keyword>
<keyword id="KW-0233">DNA recombination</keyword>
<keyword id="KW-0234">DNA repair</keyword>
<keyword id="KW-0479">Metal-binding</keyword>
<keyword id="KW-0862">Zinc</keyword>
<keyword id="KW-0863">Zinc-finger</keyword>